<sequence>MANGLFTYVAISLFTIGPLLALFIPFVWRLVGSSLGWYLRRKTDGRRCHILEVVEADERKYRDSKSAKGRKAEKEDRDTFNNTEATGTSDGKVYDKDWDGIVGFFHPFCNAGGGGERVLWAAIRATQKRWPKAKCVVYTGDHDVSKEAILSRVEQRFNIHLHPPTVNFLYLSTRRWVLASTWPYFTLAGQSFGSLIMAWDAFSLLVPDIFVDTMGYAFALGFSRFLFRDVPTAAYVHYPTISTDMLESLDPASAVGSQGVNAGKGTGAKGRAKKIYWQLFARLYSLMGASVDVVMTNSTWTQAHIEKLWGPVRNLTGAVPGIKSKVNPIAVVYPPVAVEELEQEVEVSPESEKRRENVLLYIAQFRPEKNHQLIVQAFAEFLKSGSEAARDAKLVLVGSVRDDYDSKRVYKLRLLVNELHIKDRVEFHLDASWPDILEWLRRASVGVNGMWNEHFGIGVVEYQAAGLISVVHDSGGPKLDIVVEVDGEPTGFHATTSKEFAEGFEKALSLPNPYAVRLRARKSAKRFTEEEFARRWIEQLEKCVAIKAVEKPKSRQ</sequence>
<organism>
    <name type="scientific">Neurospora crassa (strain ATCC 24698 / 74-OR23-1A / CBS 708.71 / DSM 1257 / FGSC 987)</name>
    <dbReference type="NCBI Taxonomy" id="367110"/>
    <lineage>
        <taxon>Eukaryota</taxon>
        <taxon>Fungi</taxon>
        <taxon>Dikarya</taxon>
        <taxon>Ascomycota</taxon>
        <taxon>Pezizomycotina</taxon>
        <taxon>Sordariomycetes</taxon>
        <taxon>Sordariomycetidae</taxon>
        <taxon>Sordariales</taxon>
        <taxon>Sordariaceae</taxon>
        <taxon>Neurospora</taxon>
    </lineage>
</organism>
<gene>
    <name type="primary">alg-11</name>
    <name type="ORF">B14D6.360</name>
    <name type="ORF">NCU06779</name>
</gene>
<keyword id="KW-0256">Endoplasmic reticulum</keyword>
<keyword id="KW-0328">Glycosyltransferase</keyword>
<keyword id="KW-0472">Membrane</keyword>
<keyword id="KW-1185">Reference proteome</keyword>
<keyword id="KW-0808">Transferase</keyword>
<keyword id="KW-0812">Transmembrane</keyword>
<keyword id="KW-1133">Transmembrane helix</keyword>
<proteinExistence type="inferred from homology"/>
<reference key="1">
    <citation type="journal article" date="2003" name="Nucleic Acids Res.">
        <title>What's in the genome of a filamentous fungus? Analysis of the Neurospora genome sequence.</title>
        <authorList>
            <person name="Mannhaupt G."/>
            <person name="Montrone C."/>
            <person name="Haase D."/>
            <person name="Mewes H.-W."/>
            <person name="Aign V."/>
            <person name="Hoheisel J.D."/>
            <person name="Fartmann B."/>
            <person name="Nyakatura G."/>
            <person name="Kempken F."/>
            <person name="Maier J."/>
            <person name="Schulte U."/>
        </authorList>
    </citation>
    <scope>NUCLEOTIDE SEQUENCE [LARGE SCALE GENOMIC DNA]</scope>
    <source>
        <strain>ATCC 24698 / 74-OR23-1A / CBS 708.71 / DSM 1257 / FGSC 987</strain>
    </source>
</reference>
<reference key="2">
    <citation type="journal article" date="2003" name="Nature">
        <title>The genome sequence of the filamentous fungus Neurospora crassa.</title>
        <authorList>
            <person name="Galagan J.E."/>
            <person name="Calvo S.E."/>
            <person name="Borkovich K.A."/>
            <person name="Selker E.U."/>
            <person name="Read N.D."/>
            <person name="Jaffe D.B."/>
            <person name="FitzHugh W."/>
            <person name="Ma L.-J."/>
            <person name="Smirnov S."/>
            <person name="Purcell S."/>
            <person name="Rehman B."/>
            <person name="Elkins T."/>
            <person name="Engels R."/>
            <person name="Wang S."/>
            <person name="Nielsen C.B."/>
            <person name="Butler J."/>
            <person name="Endrizzi M."/>
            <person name="Qui D."/>
            <person name="Ianakiev P."/>
            <person name="Bell-Pedersen D."/>
            <person name="Nelson M.A."/>
            <person name="Werner-Washburne M."/>
            <person name="Selitrennikoff C.P."/>
            <person name="Kinsey J.A."/>
            <person name="Braun E.L."/>
            <person name="Zelter A."/>
            <person name="Schulte U."/>
            <person name="Kothe G.O."/>
            <person name="Jedd G."/>
            <person name="Mewes H.-W."/>
            <person name="Staben C."/>
            <person name="Marcotte E."/>
            <person name="Greenberg D."/>
            <person name="Roy A."/>
            <person name="Foley K."/>
            <person name="Naylor J."/>
            <person name="Stange-Thomann N."/>
            <person name="Barrett R."/>
            <person name="Gnerre S."/>
            <person name="Kamal M."/>
            <person name="Kamvysselis M."/>
            <person name="Mauceli E.W."/>
            <person name="Bielke C."/>
            <person name="Rudd S."/>
            <person name="Frishman D."/>
            <person name="Krystofova S."/>
            <person name="Rasmussen C."/>
            <person name="Metzenberg R.L."/>
            <person name="Perkins D.D."/>
            <person name="Kroken S."/>
            <person name="Cogoni C."/>
            <person name="Macino G."/>
            <person name="Catcheside D.E.A."/>
            <person name="Li W."/>
            <person name="Pratt R.J."/>
            <person name="Osmani S.A."/>
            <person name="DeSouza C.P.C."/>
            <person name="Glass N.L."/>
            <person name="Orbach M.J."/>
            <person name="Berglund J.A."/>
            <person name="Voelker R."/>
            <person name="Yarden O."/>
            <person name="Plamann M."/>
            <person name="Seiler S."/>
            <person name="Dunlap J.C."/>
            <person name="Radford A."/>
            <person name="Aramayo R."/>
            <person name="Natvig D.O."/>
            <person name="Alex L.A."/>
            <person name="Mannhaupt G."/>
            <person name="Ebbole D.J."/>
            <person name="Freitag M."/>
            <person name="Paulsen I."/>
            <person name="Sachs M.S."/>
            <person name="Lander E.S."/>
            <person name="Nusbaum C."/>
            <person name="Birren B.W."/>
        </authorList>
    </citation>
    <scope>NUCLEOTIDE SEQUENCE [LARGE SCALE GENOMIC DNA]</scope>
    <source>
        <strain>ATCC 24698 / 74-OR23-1A / CBS 708.71 / DSM 1257 / FGSC 987</strain>
    </source>
</reference>
<name>ALG11_NEUCR</name>
<comment type="function">
    <text evidence="1">GDP-Man:Man(3)GlcNAc(2)-PP-Dol alpha-1,2-mannosyltransferase that operates in the biosynthetic pathway of dolichol-linked oligosaccharides, the glycan precursors employed in protein asparagine (N)-glycosylation. The assembly of dolichol-linked oligosaccharides begins on the cytosolic side of the endoplasmic reticulum membrane and finishes in its lumen. The sequential addition of sugars to dolichol pyrophosphate produces dolichol-linked oligosaccharides containing fourteen sugars, including two GlcNAcs, nine mannoses and three glucoses. Once assembled, the oligosaccharide is transferred from the lipid to nascent proteins by oligosaccharyltransferases. Catalyzes, on the cytoplasmic face of the endoplasmic reticulum, the addition of the fourth and fifth mannose residues to the dolichol-linked oligosaccharide chain, to produce Man(5)GlcNAc(2)-PP-dolichol core oligosaccharide.</text>
</comment>
<comment type="catalytic activity">
    <reaction evidence="1">
        <text>an alpha-D-Man-(1-&gt;3)-[alpha-D-Man-(1-&gt;6)]-beta-D-Man-(1-&gt;4)-beta-D-GlcNAc-(1-&gt;4)-alpha-D-GlcNAc-diphospho-di-trans,poly-cis-dolichol + 2 GDP-alpha-D-mannose = an alpha-D-Man-(1-&gt;2)-alpha-D-Man-(1-&gt;2)-alpha-D-Man-(1-&gt;3)-[alpha-D-Man-(1-&gt;6)]-beta-D-Man-(1-&gt;4)-beta-D-GlcNAc-(1-&gt;4)-alpha-D-GlcNAc-diphospho-di-trans,poly-cis-dolichol + 2 GDP + 2 H(+)</text>
        <dbReference type="Rhea" id="RHEA:29523"/>
        <dbReference type="Rhea" id="RHEA-COMP:19515"/>
        <dbReference type="Rhea" id="RHEA-COMP:19516"/>
        <dbReference type="ChEBI" id="CHEBI:15378"/>
        <dbReference type="ChEBI" id="CHEBI:57527"/>
        <dbReference type="ChEBI" id="CHEBI:58189"/>
        <dbReference type="ChEBI" id="CHEBI:132511"/>
        <dbReference type="ChEBI" id="CHEBI:132515"/>
        <dbReference type="EC" id="2.4.1.131"/>
    </reaction>
    <physiologicalReaction direction="left-to-right" evidence="1">
        <dbReference type="Rhea" id="RHEA:29524"/>
    </physiologicalReaction>
</comment>
<comment type="pathway">
    <text evidence="1">Protein modification; protein glycosylation.</text>
</comment>
<comment type="subcellular location">
    <subcellularLocation>
        <location evidence="1">Endoplasmic reticulum membrane</location>
        <topology evidence="1">Single-pass membrane protein</topology>
    </subcellularLocation>
</comment>
<comment type="similarity">
    <text evidence="4">Belongs to the glycosyltransferase group 1 family. Glycosyltransferase 4 subfamily.</text>
</comment>
<accession>Q8X092</accession>
<accession>Q1K8Z1</accession>
<feature type="chain" id="PRO_0000080277" description="GDP-Man:Man(3)GlcNAc(2)-PP-Dol alpha-1,2-mannosyltransferase">
    <location>
        <begin position="1"/>
        <end position="556"/>
    </location>
</feature>
<feature type="topological domain" description="Lumenal" evidence="1">
    <location>
        <begin position="1"/>
        <end position="7"/>
    </location>
</feature>
<feature type="transmembrane region" description="Helical" evidence="2">
    <location>
        <begin position="8"/>
        <end position="28"/>
    </location>
</feature>
<feature type="topological domain" description="Cytoplasmic" evidence="1">
    <location>
        <begin position="29"/>
        <end position="184"/>
    </location>
</feature>
<feature type="intramembrane region" description="Helical" evidence="2">
    <location>
        <begin position="185"/>
        <end position="205"/>
    </location>
</feature>
<feature type="topological domain" description="Cytoplasmic" evidence="1">
    <location>
        <begin position="206"/>
        <end position="454"/>
    </location>
</feature>
<feature type="intramembrane region" description="Helical" evidence="2">
    <location>
        <begin position="455"/>
        <end position="475"/>
    </location>
</feature>
<feature type="topological domain" description="Cytoplasmic" evidence="1">
    <location>
        <begin position="476"/>
        <end position="556"/>
    </location>
</feature>
<feature type="region of interest" description="Disordered" evidence="3">
    <location>
        <begin position="64"/>
        <end position="86"/>
    </location>
</feature>
<feature type="compositionally biased region" description="Basic and acidic residues" evidence="3">
    <location>
        <begin position="64"/>
        <end position="79"/>
    </location>
</feature>
<dbReference type="EC" id="2.4.1.131" evidence="1"/>
<dbReference type="EMBL" id="AL356173">
    <property type="protein sequence ID" value="CAB91745.2"/>
    <property type="molecule type" value="Genomic_DNA"/>
</dbReference>
<dbReference type="EMBL" id="CM002237">
    <property type="protein sequence ID" value="EAA34384.1"/>
    <property type="molecule type" value="Genomic_DNA"/>
</dbReference>
<dbReference type="RefSeq" id="XP_963620.1">
    <property type="nucleotide sequence ID" value="XM_958527.3"/>
</dbReference>
<dbReference type="SMR" id="Q8X092"/>
<dbReference type="FunCoup" id="Q8X092">
    <property type="interactions" value="397"/>
</dbReference>
<dbReference type="STRING" id="367110.Q8X092"/>
<dbReference type="CAZy" id="GT4">
    <property type="family name" value="Glycosyltransferase Family 4"/>
</dbReference>
<dbReference type="GlyCosmos" id="Q8X092">
    <property type="glycosylation" value="3 sites, No reported glycans"/>
</dbReference>
<dbReference type="PaxDb" id="5141-EFNCRP00000006879"/>
<dbReference type="EnsemblFungi" id="EAA34384">
    <property type="protein sequence ID" value="EAA34384"/>
    <property type="gene ID" value="NCU06779"/>
</dbReference>
<dbReference type="GeneID" id="3879830"/>
<dbReference type="KEGG" id="ncr:NCU06779"/>
<dbReference type="VEuPathDB" id="FungiDB:NCU06779"/>
<dbReference type="HOGENOM" id="CLU_017896_1_1_1"/>
<dbReference type="InParanoid" id="Q8X092"/>
<dbReference type="OMA" id="ARLYGWV"/>
<dbReference type="OrthoDB" id="2276068at2759"/>
<dbReference type="UniPathway" id="UPA00378"/>
<dbReference type="Proteomes" id="UP000001805">
    <property type="component" value="Chromosome 6, Linkage Group II"/>
</dbReference>
<dbReference type="GO" id="GO:0005789">
    <property type="term" value="C:endoplasmic reticulum membrane"/>
    <property type="evidence" value="ECO:0000318"/>
    <property type="project" value="GO_Central"/>
</dbReference>
<dbReference type="GO" id="GO:0004377">
    <property type="term" value="F:GDP-Man:Man3GlcNAc2-PP-Dol alpha-1,2-mannosyltransferase activity"/>
    <property type="evidence" value="ECO:0000318"/>
    <property type="project" value="GO_Central"/>
</dbReference>
<dbReference type="GO" id="GO:0006488">
    <property type="term" value="P:dolichol-linked oligosaccharide biosynthetic process"/>
    <property type="evidence" value="ECO:0000318"/>
    <property type="project" value="GO_Central"/>
</dbReference>
<dbReference type="CDD" id="cd03806">
    <property type="entry name" value="GT4_ALG11-like"/>
    <property type="match status" value="1"/>
</dbReference>
<dbReference type="FunFam" id="3.40.50.2000:FF:000168">
    <property type="entry name" value="Alpha-1,2-mannosyltransferase (Alg11), putative"/>
    <property type="match status" value="1"/>
</dbReference>
<dbReference type="Gene3D" id="3.40.50.2000">
    <property type="entry name" value="Glycogen Phosphorylase B"/>
    <property type="match status" value="1"/>
</dbReference>
<dbReference type="InterPro" id="IPR038013">
    <property type="entry name" value="ALG11"/>
</dbReference>
<dbReference type="InterPro" id="IPR031814">
    <property type="entry name" value="ALG11_N"/>
</dbReference>
<dbReference type="InterPro" id="IPR001296">
    <property type="entry name" value="Glyco_trans_1"/>
</dbReference>
<dbReference type="PANTHER" id="PTHR45919">
    <property type="entry name" value="GDP-MAN:MAN(3)GLCNAC(2)-PP-DOL ALPHA-1,2-MANNOSYLTRANSFERASE"/>
    <property type="match status" value="1"/>
</dbReference>
<dbReference type="PANTHER" id="PTHR45919:SF1">
    <property type="entry name" value="GDP-MAN:MAN(3)GLCNAC(2)-PP-DOL ALPHA-1,2-MANNOSYLTRANSFERASE"/>
    <property type="match status" value="1"/>
</dbReference>
<dbReference type="Pfam" id="PF15924">
    <property type="entry name" value="ALG11_N"/>
    <property type="match status" value="1"/>
</dbReference>
<dbReference type="Pfam" id="PF00534">
    <property type="entry name" value="Glycos_transf_1"/>
    <property type="match status" value="1"/>
</dbReference>
<dbReference type="SUPFAM" id="SSF53756">
    <property type="entry name" value="UDP-Glycosyltransferase/glycogen phosphorylase"/>
    <property type="match status" value="1"/>
</dbReference>
<evidence type="ECO:0000250" key="1">
    <source>
        <dbReference type="UniProtKB" id="P53954"/>
    </source>
</evidence>
<evidence type="ECO:0000255" key="2"/>
<evidence type="ECO:0000256" key="3">
    <source>
        <dbReference type="SAM" id="MobiDB-lite"/>
    </source>
</evidence>
<evidence type="ECO:0000305" key="4"/>
<protein>
    <recommendedName>
        <fullName evidence="1">GDP-Man:Man(3)GlcNAc(2)-PP-Dol alpha-1,2-mannosyltransferase</fullName>
        <ecNumber evidence="1">2.4.1.131</ecNumber>
    </recommendedName>
    <alternativeName>
        <fullName>Alpha-1,2-mannosyltransferase alg-11</fullName>
    </alternativeName>
    <alternativeName>
        <fullName>Asparagine-linked glycosylation protein 11</fullName>
    </alternativeName>
    <alternativeName>
        <fullName>Glycolipid 2-alpha-mannosyltransferase</fullName>
    </alternativeName>
</protein>